<name>Y592_RICPR</name>
<keyword id="KW-1185">Reference proteome</keyword>
<sequence length="204" mass="24131">MNVIDLLILDNEKYKKQFRKNKLFKIKFDSTLRKNKFLKHFRIWSDEFQKMVLARVVFSETKEFKQLAWDHLTDEFGHNIELSQNLENDKETTDSIFEALGSWFTLKMMTLGDSERAVLVHLVIESCATIFYEKLGSIFCNHKASQHFKTHMHLDPEHEQMGINLLKQININDFSLLIIQKKGWDMIDALFTRLAEITTIPDNF</sequence>
<organism>
    <name type="scientific">Rickettsia prowazekii (strain Madrid E)</name>
    <dbReference type="NCBI Taxonomy" id="272947"/>
    <lineage>
        <taxon>Bacteria</taxon>
        <taxon>Pseudomonadati</taxon>
        <taxon>Pseudomonadota</taxon>
        <taxon>Alphaproteobacteria</taxon>
        <taxon>Rickettsiales</taxon>
        <taxon>Rickettsiaceae</taxon>
        <taxon>Rickettsieae</taxon>
        <taxon>Rickettsia</taxon>
        <taxon>typhus group</taxon>
    </lineage>
</organism>
<accession>Q9ZCW2</accession>
<proteinExistence type="predicted"/>
<feature type="chain" id="PRO_0000101400" description="Uncharacterized protein RP592">
    <location>
        <begin position="1"/>
        <end position="204"/>
    </location>
</feature>
<reference key="1">
    <citation type="journal article" date="1998" name="Nature">
        <title>The genome sequence of Rickettsia prowazekii and the origin of mitochondria.</title>
        <authorList>
            <person name="Andersson S.G.E."/>
            <person name="Zomorodipour A."/>
            <person name="Andersson J.O."/>
            <person name="Sicheritz-Ponten T."/>
            <person name="Alsmark U.C.M."/>
            <person name="Podowski R.M."/>
            <person name="Naeslund A.K."/>
            <person name="Eriksson A.-S."/>
            <person name="Winkler H.H."/>
            <person name="Kurland C.G."/>
        </authorList>
    </citation>
    <scope>NUCLEOTIDE SEQUENCE [LARGE SCALE GENOMIC DNA]</scope>
    <source>
        <strain>Madrid E</strain>
    </source>
</reference>
<gene>
    <name type="ordered locus">RP592</name>
</gene>
<dbReference type="EMBL" id="AJ235272">
    <property type="protein sequence ID" value="CAA15037.1"/>
    <property type="molecule type" value="Genomic_DNA"/>
</dbReference>
<dbReference type="PIR" id="C71664">
    <property type="entry name" value="C71664"/>
</dbReference>
<dbReference type="RefSeq" id="NP_220961.1">
    <property type="nucleotide sequence ID" value="NC_000963.1"/>
</dbReference>
<dbReference type="RefSeq" id="WP_004599000.1">
    <property type="nucleotide sequence ID" value="NC_000963.1"/>
</dbReference>
<dbReference type="SMR" id="Q9ZCW2"/>
<dbReference type="STRING" id="272947.gene:17555672"/>
<dbReference type="EnsemblBacteria" id="CAA15037">
    <property type="protein sequence ID" value="CAA15037"/>
    <property type="gene ID" value="CAA15037"/>
</dbReference>
<dbReference type="KEGG" id="rpr:RP592"/>
<dbReference type="PATRIC" id="fig|272947.5.peg.609"/>
<dbReference type="eggNOG" id="COG1917">
    <property type="taxonomic scope" value="Bacteria"/>
</dbReference>
<dbReference type="HOGENOM" id="CLU_117633_0_0_5"/>
<dbReference type="OrthoDB" id="6979651at2"/>
<dbReference type="Proteomes" id="UP000002480">
    <property type="component" value="Chromosome"/>
</dbReference>
<protein>
    <recommendedName>
        <fullName>Uncharacterized protein RP592</fullName>
    </recommendedName>
</protein>